<comment type="function">
    <text evidence="6 9 10">Component of the Mediator complex, a coactivator involved in the regulated transcription of nearly all RNA polymerase II-dependent genes. Mediator functions as a bridge to convey information from gene-specific regulatory proteins to the basal RNA polymerase II transcription machinery. Mediator is recruited to promoters by direct interactions with regulatory proteins and serves as a scaffold for the assembly of a functional preinitiation complex with RNA polymerase II and the general transcription factors. Required for cholesterol-dependent gene regulation. Positively regulates the Nodal signaling pathway.</text>
</comment>
<comment type="subunit">
    <text evidence="4 6 7 8 10 11 12">Component of the Mediator complex, which is composed of MED1, MED4, MED6, MED7, MED8, MED9, MED10, MED11, MED12, MED13, MED13L, MED14, MED15, MED16, MED17, MED18, MED19, MED20, MED21, MED22, MED23, MED24, MED25, MED26, MED27, MED29, MED30, MED31, CCNC, CDK8 and CDC2L6/CDK11. The MED12, MED13, CCNC and CDK8 subunits form a distinct module termed the CDK8 module. Mediator containing the CDK8 module is less active than Mediator lacking this module in supporting transcriptional activation. Individual preparations of the Mediator complex lacking one or more distinct subunits have been variously termed ARC, CRSP, DRIP, PC2, SMCC and TRAP. Interacts with SMAD2, SMAD3, SREBF1 and SREBF2. Interacts with WWTR1. Interacts with TRIM11.</text>
</comment>
<comment type="interaction">
    <interactant intactId="EBI-394506">
        <id>Q96RN5</id>
    </interactant>
    <interactant intactId="EBI-466029">
        <id>P42858</id>
        <label>HTT</label>
    </interactant>
    <organismsDiffer>false</organismsDiffer>
    <experiments>3</experiments>
</comment>
<comment type="interaction">
    <interactant intactId="EBI-394506">
        <id>Q96RN5</id>
    </interactant>
    <interactant intactId="EBI-394489">
        <id>O60244</id>
        <label>MED14</label>
    </interactant>
    <organismsDiffer>false</organismsDiffer>
    <experiments>3</experiments>
</comment>
<comment type="interaction">
    <interactant intactId="EBI-394506">
        <id>Q96RN5</id>
    </interactant>
    <interactant intactId="EBI-394558">
        <id>Q71SY5</id>
        <label>MED25</label>
    </interactant>
    <organismsDiffer>false</organismsDiffer>
    <experiments>2</experiments>
</comment>
<comment type="interaction">
    <interactant intactId="EBI-394506">
        <id>Q96RN5</id>
    </interactant>
    <interactant intactId="EBI-948328">
        <id>P36956-1</id>
        <label>SREBF1</label>
    </interactant>
    <organismsDiffer>false</organismsDiffer>
    <experiments>7</experiments>
</comment>
<comment type="interaction">
    <interactant intactId="EBI-394506">
        <id>Q96RN5</id>
    </interactant>
    <interactant intactId="EBI-948338">
        <id>P36956-3</id>
        <label>SREBF1</label>
    </interactant>
    <organismsDiffer>false</organismsDiffer>
    <experiments>2</experiments>
</comment>
<comment type="interaction">
    <interactant intactId="EBI-394506">
        <id>Q96RN5</id>
    </interactant>
    <interactant intactId="EBI-465059">
        <id>Q12772</id>
        <label>SREBF2</label>
    </interactant>
    <organismsDiffer>false</organismsDiffer>
    <experiments>2</experiments>
</comment>
<comment type="interaction">
    <interactant intactId="EBI-394506">
        <id>Q96RN5</id>
    </interactant>
    <interactant intactId="EBI-851809">
        <id>Q96F44</id>
        <label>TRIM11</label>
    </interactant>
    <organismsDiffer>false</organismsDiffer>
    <experiments>5</experiments>
</comment>
<comment type="interaction">
    <interactant intactId="EBI-11030807">
        <id>Q96RN5-2</id>
    </interactant>
    <interactant intactId="EBI-930964">
        <id>P54253</id>
        <label>ATXN1</label>
    </interactant>
    <organismsDiffer>false</organismsDiffer>
    <experiments>6</experiments>
</comment>
<comment type="interaction">
    <interactant intactId="EBI-11030807">
        <id>Q96RN5-2</id>
    </interactant>
    <interactant intactId="EBI-466029">
        <id>P42858</id>
        <label>HTT</label>
    </interactant>
    <organismsDiffer>false</organismsDiffer>
    <experiments>6</experiments>
</comment>
<comment type="subcellular location">
    <subcellularLocation>
        <location>Cytoplasm</location>
    </subcellularLocation>
    <subcellularLocation>
        <location>Nucleus</location>
    </subcellularLocation>
</comment>
<comment type="alternative products">
    <event type="alternative splicing"/>
    <isoform>
        <id>Q96RN5-1</id>
        <name>1</name>
        <sequence type="displayed"/>
    </isoform>
    <isoform>
        <id>Q96RN5-2</id>
        <name>2</name>
        <sequence type="described" ref="VSP_003922"/>
    </isoform>
    <isoform>
        <id>Q96RN5-3</id>
        <name>3</name>
        <sequence type="described" ref="VSP_013024 VSP_003922"/>
    </isoform>
</comment>
<comment type="tissue specificity">
    <text evidence="5">Expressed in all tissues examined, including heart, brain, lung, spleen, thymus, pancreas, blood leukocyte and placenta. However, the level of expression varied, with highest expression in the placenta and peripheral blood and lowest in the pancreas and kidney.</text>
</comment>
<comment type="induction">
    <text evidence="5">By 12-O-tetradecanoylphorbol-13-acetate (TPA).</text>
</comment>
<comment type="PTM">
    <text evidence="11">Ubiquitinated by TRIM11, leading to proteasomal degradation.</text>
</comment>
<comment type="polymorphism">
    <text>The poly-Gln region from amino acids 235-262 of PCQAP is polymorphic. There are from 15 to 18 repeats in the Italian population.</text>
</comment>
<comment type="similarity">
    <text evidence="19">Belongs to the Mediator complex subunit 15 family.</text>
</comment>
<comment type="sequence caution" evidence="19">
    <conflict type="frameshift">
        <sequence resource="EMBL-CDS" id="AAC12944"/>
    </conflict>
</comment>
<comment type="sequence caution" evidence="19">
    <conflict type="miscellaneous discrepancy">
        <sequence resource="EMBL-CDS" id="BAB85034"/>
    </conflict>
    <text>Several sequencing errors.</text>
</comment>
<comment type="sequence caution" evidence="19">
    <conflict type="erroneous initiation">
        <sequence resource="EMBL-CDS" id="BAC03446"/>
    </conflict>
</comment>
<protein>
    <recommendedName>
        <fullName>Mediator of RNA polymerase II transcription subunit 15</fullName>
    </recommendedName>
    <alternativeName>
        <fullName>Activator-recruited cofactor 105 kDa component</fullName>
        <shortName>ARC105</shortName>
    </alternativeName>
    <alternativeName>
        <fullName>CTG repeat protein 7a</fullName>
    </alternativeName>
    <alternativeName>
        <fullName>Mediator complex subunit 15</fullName>
    </alternativeName>
    <alternativeName>
        <fullName>Positive cofactor 2 glutamine/Q-rich-associated protein</fullName>
        <shortName>PC2 glutamine/Q-rich-associated protein</shortName>
    </alternativeName>
    <alternativeName>
        <fullName>TPA-inducible gene 1 protein</fullName>
        <shortName>TIG-1</shortName>
    </alternativeName>
    <alternativeName>
        <fullName>Trinucleotide repeat-containing gene 7 protein</fullName>
    </alternativeName>
</protein>
<accession>Q96RN5</accession>
<accession>D3DX31</accession>
<accession>D3DX32</accession>
<accession>O15413</accession>
<accession>Q6IC31</accession>
<accession>Q8NF16</accession>
<accession>Q96CT0</accession>
<accession>Q96IH7</accession>
<accession>Q9P1T3</accession>
<feature type="chain" id="PRO_0000058264" description="Mediator of RNA polymerase II transcription subunit 15">
    <location>
        <begin position="1"/>
        <end position="788"/>
    </location>
</feature>
<feature type="region of interest" description="Interaction with SREBF1" evidence="10">
    <location>
        <begin position="9"/>
        <end position="73"/>
    </location>
</feature>
<feature type="region of interest" description="Disordered" evidence="3">
    <location>
        <begin position="95"/>
        <end position="139"/>
    </location>
</feature>
<feature type="region of interest" description="Disordered" evidence="3">
    <location>
        <begin position="260"/>
        <end position="329"/>
    </location>
</feature>
<feature type="region of interest" description="Disordered" evidence="3">
    <location>
        <begin position="412"/>
        <end position="530"/>
    </location>
</feature>
<feature type="short sequence motif" description="Nuclear localization signal" evidence="2">
    <location>
        <begin position="547"/>
        <end position="564"/>
    </location>
</feature>
<feature type="compositionally biased region" description="Gly residues" evidence="3">
    <location>
        <begin position="108"/>
        <end position="117"/>
    </location>
</feature>
<feature type="compositionally biased region" description="Low complexity" evidence="3">
    <location>
        <begin position="260"/>
        <end position="269"/>
    </location>
</feature>
<feature type="compositionally biased region" description="Pro residues" evidence="3">
    <location>
        <begin position="270"/>
        <end position="284"/>
    </location>
</feature>
<feature type="compositionally biased region" description="Low complexity" evidence="3">
    <location>
        <begin position="285"/>
        <end position="294"/>
    </location>
</feature>
<feature type="compositionally biased region" description="Low complexity" evidence="3">
    <location>
        <begin position="309"/>
        <end position="329"/>
    </location>
</feature>
<feature type="compositionally biased region" description="Low complexity" evidence="3">
    <location>
        <begin position="426"/>
        <end position="446"/>
    </location>
</feature>
<feature type="compositionally biased region" description="Pro residues" evidence="3">
    <location>
        <begin position="447"/>
        <end position="459"/>
    </location>
</feature>
<feature type="compositionally biased region" description="Low complexity" evidence="3">
    <location>
        <begin position="460"/>
        <end position="482"/>
    </location>
</feature>
<feature type="compositionally biased region" description="Polar residues" evidence="3">
    <location>
        <begin position="493"/>
        <end position="503"/>
    </location>
</feature>
<feature type="compositionally biased region" description="Polar residues" evidence="3">
    <location>
        <begin position="511"/>
        <end position="529"/>
    </location>
</feature>
<feature type="modified residue" description="Asymmetric dimethylarginine" evidence="1">
    <location>
        <position position="349"/>
    </location>
</feature>
<feature type="modified residue" description="Phosphothreonine" evidence="20 21 22">
    <location>
        <position position="603"/>
    </location>
</feature>
<feature type="splice variant" id="VSP_013024" description="In isoform 3." evidence="16">
    <original>DPMNALQSLTGGPAAGAAGIGMPPRGPGQSLGGMGSLGAMGQPMSLSGQPPPGTSGMAPHSMAVVSTATPQT</original>
    <variation>A</variation>
    <location>
        <begin position="80"/>
        <end position="151"/>
    </location>
</feature>
<feature type="splice variant" id="VSP_003922" description="In isoform 2 and isoform 3." evidence="13 14 15 16 17 18">
    <location>
        <begin position="385"/>
        <end position="424"/>
    </location>
</feature>
<feature type="sequence variant" id="VAR_013136">
    <location>
        <begin position="261"/>
        <end position="262"/>
    </location>
</feature>
<feature type="mutagenesis site" description="Abrogates interaction with SREBF1." evidence="10">
    <original>E</original>
    <variation>A</variation>
    <location>
        <position position="42"/>
    </location>
</feature>
<feature type="mutagenesis site" description="Abrogates interaction with SREBF1." evidence="10">
    <original>L</original>
    <variation>D</variation>
    <location>
        <position position="58"/>
    </location>
</feature>
<feature type="mutagenesis site" description="Abrogates interaction with SREBF1." evidence="10">
    <original>A</original>
    <variation>D</variation>
    <location>
        <position position="60"/>
    </location>
</feature>
<feature type="sequence conflict" description="In Ref. 1; AAC12944." evidence="19" ref="1">
    <original>S</original>
    <variation>R</variation>
    <location>
        <position position="12"/>
    </location>
</feature>
<feature type="sequence conflict" description="In Ref. 1; AAC12944." evidence="19" ref="1">
    <original>L</original>
    <variation>F</variation>
    <location>
        <position position="116"/>
    </location>
</feature>
<feature type="sequence conflict" description="In Ref. 3; BAC03446." evidence="19" ref="3">
    <original>Q</original>
    <variation>H</variation>
    <location>
        <position position="154"/>
    </location>
</feature>
<feature type="sequence conflict" description="In Ref. 3; BAB85034." evidence="19" ref="3">
    <original>Q</original>
    <variation>R</variation>
    <location>
        <position position="161"/>
    </location>
</feature>
<feature type="sequence conflict" description="In Ref. 7; AAB91443." evidence="19" ref="7">
    <original>QQ</original>
    <variation>EL</variation>
    <location>
        <begin position="185"/>
        <end position="186"/>
    </location>
</feature>
<feature type="sequence conflict" description="In Ref. 4; CAG30423." evidence="19" ref="4">
    <location>
        <begin position="186"/>
        <end position="187"/>
    </location>
</feature>
<feature type="sequence conflict" description="In Ref. 4; CAG30423." evidence="19" ref="4">
    <location>
        <position position="218"/>
    </location>
</feature>
<feature type="sequence conflict" description="In Ref. 3; BAB85034." evidence="19" ref="3">
    <location>
        <begin position="232"/>
        <end position="287"/>
    </location>
</feature>
<feature type="sequence conflict" description="In Ref. 1; AAC12944 and 7; AAB91443." evidence="19" ref="1 7">
    <original>Q</original>
    <variation>E</variation>
    <location>
        <position position="265"/>
    </location>
</feature>
<feature type="sequence conflict" description="In Ref. 7; AAB91443." evidence="19" ref="7">
    <original>IL</original>
    <variation>GI</variation>
    <location>
        <begin position="572"/>
        <end position="573"/>
    </location>
</feature>
<feature type="sequence conflict" description="In Ref. 3; BAB85034." evidence="19" ref="3">
    <original>L</original>
    <variation>V</variation>
    <location>
        <position position="685"/>
    </location>
</feature>
<feature type="helix" evidence="23">
    <location>
        <begin position="13"/>
        <end position="30"/>
    </location>
</feature>
<feature type="helix" evidence="23">
    <location>
        <begin position="38"/>
        <end position="48"/>
    </location>
</feature>
<feature type="helix" evidence="23">
    <location>
        <begin position="52"/>
        <end position="71"/>
    </location>
</feature>
<feature type="turn" evidence="24">
    <location>
        <begin position="616"/>
        <end position="618"/>
    </location>
</feature>
<feature type="helix" evidence="24">
    <location>
        <begin position="619"/>
        <end position="627"/>
    </location>
</feature>
<feature type="helix" evidence="24">
    <location>
        <begin position="634"/>
        <end position="649"/>
    </location>
</feature>
<feature type="helix" evidence="24">
    <location>
        <begin position="676"/>
        <end position="683"/>
    </location>
</feature>
<feature type="strand" evidence="24">
    <location>
        <begin position="695"/>
        <end position="697"/>
    </location>
</feature>
<feature type="strand" evidence="24">
    <location>
        <begin position="700"/>
        <end position="707"/>
    </location>
</feature>
<feature type="strand" evidence="24">
    <location>
        <begin position="713"/>
        <end position="715"/>
    </location>
</feature>
<feature type="strand" evidence="24">
    <location>
        <begin position="722"/>
        <end position="725"/>
    </location>
</feature>
<feature type="strand" evidence="24">
    <location>
        <begin position="735"/>
        <end position="737"/>
    </location>
</feature>
<feature type="turn" evidence="24">
    <location>
        <begin position="740"/>
        <end position="743"/>
    </location>
</feature>
<feature type="helix" evidence="24">
    <location>
        <begin position="747"/>
        <end position="761"/>
    </location>
</feature>
<feature type="helix" evidence="24">
    <location>
        <begin position="769"/>
        <end position="787"/>
    </location>
</feature>
<proteinExistence type="evidence at protein level"/>
<keyword id="KW-0002">3D-structure</keyword>
<keyword id="KW-0010">Activator</keyword>
<keyword id="KW-0025">Alternative splicing</keyword>
<keyword id="KW-0963">Cytoplasm</keyword>
<keyword id="KW-0903">Direct protein sequencing</keyword>
<keyword id="KW-0488">Methylation</keyword>
<keyword id="KW-0539">Nucleus</keyword>
<keyword id="KW-0597">Phosphoprotein</keyword>
<keyword id="KW-1267">Proteomics identification</keyword>
<keyword id="KW-1185">Reference proteome</keyword>
<keyword id="KW-0804">Transcription</keyword>
<keyword id="KW-0805">Transcription regulation</keyword>
<keyword id="KW-0818">Triplet repeat expansion</keyword>
<keyword id="KW-0832">Ubl conjugation</keyword>
<name>MED15_HUMAN</name>
<evidence type="ECO:0000250" key="1">
    <source>
        <dbReference type="UniProtKB" id="Q924H2"/>
    </source>
</evidence>
<evidence type="ECO:0000255" key="2"/>
<evidence type="ECO:0000256" key="3">
    <source>
        <dbReference type="SAM" id="MobiDB-lite"/>
    </source>
</evidence>
<evidence type="ECO:0000269" key="4">
    <source>
    </source>
</evidence>
<evidence type="ECO:0000269" key="5">
    <source>
    </source>
</evidence>
<evidence type="ECO:0000269" key="6">
    <source>
    </source>
</evidence>
<evidence type="ECO:0000269" key="7">
    <source>
    </source>
</evidence>
<evidence type="ECO:0000269" key="8">
    <source>
    </source>
</evidence>
<evidence type="ECO:0000269" key="9">
    <source>
    </source>
</evidence>
<evidence type="ECO:0000269" key="10">
    <source>
    </source>
</evidence>
<evidence type="ECO:0000269" key="11">
    <source>
    </source>
</evidence>
<evidence type="ECO:0000269" key="12">
    <source>
    </source>
</evidence>
<evidence type="ECO:0000303" key="13">
    <source>
    </source>
</evidence>
<evidence type="ECO:0000303" key="14">
    <source>
    </source>
</evidence>
<evidence type="ECO:0000303" key="15">
    <source>
    </source>
</evidence>
<evidence type="ECO:0000303" key="16">
    <source>
    </source>
</evidence>
<evidence type="ECO:0000303" key="17">
    <source>
    </source>
</evidence>
<evidence type="ECO:0000303" key="18">
    <source>
    </source>
</evidence>
<evidence type="ECO:0000305" key="19"/>
<evidence type="ECO:0007744" key="20">
    <source>
    </source>
</evidence>
<evidence type="ECO:0007744" key="21">
    <source>
    </source>
</evidence>
<evidence type="ECO:0007744" key="22">
    <source>
    </source>
</evidence>
<evidence type="ECO:0007829" key="23">
    <source>
        <dbReference type="PDB" id="2GUT"/>
    </source>
</evidence>
<evidence type="ECO:0007829" key="24">
    <source>
        <dbReference type="PDB" id="7EMF"/>
    </source>
</evidence>
<sequence>MDVSGQETDWRSTAFRQKLVSQIEDAMRKAGVAHSKSSKDMESHVFLKAKTRDEYLSLVARLIIHFRDIHNKKSQASVSDPMNALQSLTGGPAAGAAGIGMPPRGPGQSLGGMGSLGAMGQPMSLSGQPPPGTSGMAPHSMAVVSTATPQTQLQLQQVALQQQQQQQQFQQQQQAALQQQQQQQQQQQFQAQQSAMQQQFQAVVQQQQQLQQQQQQQQHLIKLHHQNQQQIQQQQQQLQRIAQLQLQQQQQQQQQQQQQQQQALQAQPPIQQPPMQQPQPPPSQALPQQLQQMHHTQHHQPPPQPQQPPVAQNQPSQLPPQSQTQPLVSQAQALPGQMLYTQPPLKFVRAPMVVQQPPVQPQVQQQQTAVQTAQAAQMVAPGVQMITEALAQGGMHIRARFPPTTAVSAIPSSSIPLGRQPMAQVSQSSLPMLSSPSPGQQVQTPQSMPPPPQPSPQPGQPSSQPNSNVSSGPAPSPSSFLPSPSPQPSQSPVTARTPQNFSVPSPGPLNTPVNPSSVMSPAGSSQAEEQQYLDKLKQLSKYIEPLRRMINKIDKNEDRKKDLSKMKSLLDILTDPSKRCPLKTLQKCEIALEKLKNDMAVPTPPPPPVPPTKQQYLCQPLLDAVLANIRSPVFNHSLYRTFVPAMTAIHGPPITAPVVCTRKRRLEDDERQSIPSVLQGEVARLDPKFLVNLDPSHCSNNGTVHLICKLDDKDLPSVPPLELSVPADYPAQSPLWIDRQWQYDANPFLQSVHRCMTSRLLQLPDKHSVTALLNTWAQSVHQACLSAA</sequence>
<gene>
    <name type="primary">MED15</name>
    <name type="synonym">ARC105</name>
    <name type="synonym">CTG7A</name>
    <name type="synonym">PCQAP</name>
    <name type="synonym">TIG1</name>
    <name type="synonym">TNRC7</name>
</gene>
<organism>
    <name type="scientific">Homo sapiens</name>
    <name type="common">Human</name>
    <dbReference type="NCBI Taxonomy" id="9606"/>
    <lineage>
        <taxon>Eukaryota</taxon>
        <taxon>Metazoa</taxon>
        <taxon>Chordata</taxon>
        <taxon>Craniata</taxon>
        <taxon>Vertebrata</taxon>
        <taxon>Euteleostomi</taxon>
        <taxon>Mammalia</taxon>
        <taxon>Eutheria</taxon>
        <taxon>Euarchontoglires</taxon>
        <taxon>Primates</taxon>
        <taxon>Haplorrhini</taxon>
        <taxon>Catarrhini</taxon>
        <taxon>Hominidae</taxon>
        <taxon>Homo</taxon>
    </lineage>
</organism>
<reference key="1">
    <citation type="journal article" date="2000" name="Gene">
        <title>A novel glutamine-rich putative transcriptional adaptor protein (TIG-1), preferentially expressed in placental and bone-marrow tissues.</title>
        <authorList>
            <person name="Abraham S."/>
            <person name="Solomon W.B."/>
        </authorList>
    </citation>
    <scope>NUCLEOTIDE SEQUENCE [MRNA] (ISOFORM 2)</scope>
    <scope>SUBCELLULAR LOCATION</scope>
    <scope>TISSUE SPECIFICITY</scope>
    <scope>INDUCTION</scope>
    <source>
        <tissue>Megakaryocyte</tissue>
        <tissue>Placenta</tissue>
    </source>
</reference>
<reference key="2">
    <citation type="journal article" date="2001" name="Genomics">
        <title>Isolation and characterization of a novel gene from the DiGeorge chromosomal region that encodes for a mediator subunit.</title>
        <authorList>
            <person name="Berti L."/>
            <person name="Mittler G."/>
            <person name="Przemeck G.K.H."/>
            <person name="Stelzer G."/>
            <person name="Guenzler B."/>
            <person name="Amati F."/>
            <person name="Conti E."/>
            <person name="Dallapiccola B."/>
            <person name="Hrabe' de Angelis M."/>
            <person name="Novelli G."/>
            <person name="Meisterernst M."/>
        </authorList>
    </citation>
    <scope>NUCLEOTIDE SEQUENCE [MRNA] (ISOFORM 2)</scope>
    <scope>POLYMORPHISM OF POLY-GLN REGION</scope>
    <source>
        <tissue>Cervix carcinoma</tissue>
    </source>
</reference>
<reference key="3">
    <citation type="journal article" date="2004" name="Nat. Genet.">
        <title>Complete sequencing and characterization of 21,243 full-length human cDNAs.</title>
        <authorList>
            <person name="Ota T."/>
            <person name="Suzuki Y."/>
            <person name="Nishikawa T."/>
            <person name="Otsuki T."/>
            <person name="Sugiyama T."/>
            <person name="Irie R."/>
            <person name="Wakamatsu A."/>
            <person name="Hayashi K."/>
            <person name="Sato H."/>
            <person name="Nagai K."/>
            <person name="Kimura K."/>
            <person name="Makita H."/>
            <person name="Sekine M."/>
            <person name="Obayashi M."/>
            <person name="Nishi T."/>
            <person name="Shibahara T."/>
            <person name="Tanaka T."/>
            <person name="Ishii S."/>
            <person name="Yamamoto J."/>
            <person name="Saito K."/>
            <person name="Kawai Y."/>
            <person name="Isono Y."/>
            <person name="Nakamura Y."/>
            <person name="Nagahari K."/>
            <person name="Murakami K."/>
            <person name="Yasuda T."/>
            <person name="Iwayanagi T."/>
            <person name="Wagatsuma M."/>
            <person name="Shiratori A."/>
            <person name="Sudo H."/>
            <person name="Hosoiri T."/>
            <person name="Kaku Y."/>
            <person name="Kodaira H."/>
            <person name="Kondo H."/>
            <person name="Sugawara M."/>
            <person name="Takahashi M."/>
            <person name="Kanda K."/>
            <person name="Yokoi T."/>
            <person name="Furuya T."/>
            <person name="Kikkawa E."/>
            <person name="Omura Y."/>
            <person name="Abe K."/>
            <person name="Kamihara K."/>
            <person name="Katsuta N."/>
            <person name="Sato K."/>
            <person name="Tanikawa M."/>
            <person name="Yamazaki M."/>
            <person name="Ninomiya K."/>
            <person name="Ishibashi T."/>
            <person name="Yamashita H."/>
            <person name="Murakawa K."/>
            <person name="Fujimori K."/>
            <person name="Tanai H."/>
            <person name="Kimata M."/>
            <person name="Watanabe M."/>
            <person name="Hiraoka S."/>
            <person name="Chiba Y."/>
            <person name="Ishida S."/>
            <person name="Ono Y."/>
            <person name="Takiguchi S."/>
            <person name="Watanabe S."/>
            <person name="Yosida M."/>
            <person name="Hotuta T."/>
            <person name="Kusano J."/>
            <person name="Kanehori K."/>
            <person name="Takahashi-Fujii A."/>
            <person name="Hara H."/>
            <person name="Tanase T.-O."/>
            <person name="Nomura Y."/>
            <person name="Togiya S."/>
            <person name="Komai F."/>
            <person name="Hara R."/>
            <person name="Takeuchi K."/>
            <person name="Arita M."/>
            <person name="Imose N."/>
            <person name="Musashino K."/>
            <person name="Yuuki H."/>
            <person name="Oshima A."/>
            <person name="Sasaki N."/>
            <person name="Aotsuka S."/>
            <person name="Yoshikawa Y."/>
            <person name="Matsunawa H."/>
            <person name="Ichihara T."/>
            <person name="Shiohata N."/>
            <person name="Sano S."/>
            <person name="Moriya S."/>
            <person name="Momiyama H."/>
            <person name="Satoh N."/>
            <person name="Takami S."/>
            <person name="Terashima Y."/>
            <person name="Suzuki O."/>
            <person name="Nakagawa S."/>
            <person name="Senoh A."/>
            <person name="Mizoguchi H."/>
            <person name="Goto Y."/>
            <person name="Shimizu F."/>
            <person name="Wakebe H."/>
            <person name="Hishigaki H."/>
            <person name="Watanabe T."/>
            <person name="Sugiyama A."/>
            <person name="Takemoto M."/>
            <person name="Kawakami B."/>
            <person name="Yamazaki M."/>
            <person name="Watanabe K."/>
            <person name="Kumagai A."/>
            <person name="Itakura S."/>
            <person name="Fukuzumi Y."/>
            <person name="Fujimori Y."/>
            <person name="Komiyama M."/>
            <person name="Tashiro H."/>
            <person name="Tanigami A."/>
            <person name="Fujiwara T."/>
            <person name="Ono T."/>
            <person name="Yamada K."/>
            <person name="Fujii Y."/>
            <person name="Ozaki K."/>
            <person name="Hirao M."/>
            <person name="Ohmori Y."/>
            <person name="Kawabata A."/>
            <person name="Hikiji T."/>
            <person name="Kobatake N."/>
            <person name="Inagaki H."/>
            <person name="Ikema Y."/>
            <person name="Okamoto S."/>
            <person name="Okitani R."/>
            <person name="Kawakami T."/>
            <person name="Noguchi S."/>
            <person name="Itoh T."/>
            <person name="Shigeta K."/>
            <person name="Senba T."/>
            <person name="Matsumura K."/>
            <person name="Nakajima Y."/>
            <person name="Mizuno T."/>
            <person name="Morinaga M."/>
            <person name="Sasaki M."/>
            <person name="Togashi T."/>
            <person name="Oyama M."/>
            <person name="Hata H."/>
            <person name="Watanabe M."/>
            <person name="Komatsu T."/>
            <person name="Mizushima-Sugano J."/>
            <person name="Satoh T."/>
            <person name="Shirai Y."/>
            <person name="Takahashi Y."/>
            <person name="Nakagawa K."/>
            <person name="Okumura K."/>
            <person name="Nagase T."/>
            <person name="Nomura N."/>
            <person name="Kikuchi H."/>
            <person name="Masuho Y."/>
            <person name="Yamashita R."/>
            <person name="Nakai K."/>
            <person name="Yada T."/>
            <person name="Nakamura Y."/>
            <person name="Ohara O."/>
            <person name="Isogai T."/>
            <person name="Sugano S."/>
        </authorList>
    </citation>
    <scope>NUCLEOTIDE SEQUENCE [LARGE SCALE MRNA] (ISOFORMS 1 AND 2)</scope>
    <source>
        <tissue>Hepatoma</tissue>
        <tissue>Spleen</tissue>
    </source>
</reference>
<reference key="4">
    <citation type="journal article" date="2004" name="Genome Biol.">
        <title>A genome annotation-driven approach to cloning the human ORFeome.</title>
        <authorList>
            <person name="Collins J.E."/>
            <person name="Wright C.L."/>
            <person name="Edwards C.A."/>
            <person name="Davis M.P."/>
            <person name="Grinham J.A."/>
            <person name="Cole C.G."/>
            <person name="Goward M.E."/>
            <person name="Aguado B."/>
            <person name="Mallya M."/>
            <person name="Mokrab Y."/>
            <person name="Huckle E.J."/>
            <person name="Beare D.M."/>
            <person name="Dunham I."/>
        </authorList>
    </citation>
    <scope>NUCLEOTIDE SEQUENCE [LARGE SCALE MRNA] (ISOFORM 3)</scope>
</reference>
<reference key="5">
    <citation type="submission" date="2005-09" db="EMBL/GenBank/DDBJ databases">
        <authorList>
            <person name="Mural R.J."/>
            <person name="Istrail S."/>
            <person name="Sutton G.G."/>
            <person name="Florea L."/>
            <person name="Halpern A.L."/>
            <person name="Mobarry C.M."/>
            <person name="Lippert R."/>
            <person name="Walenz B."/>
            <person name="Shatkay H."/>
            <person name="Dew I."/>
            <person name="Miller J.R."/>
            <person name="Flanigan M.J."/>
            <person name="Edwards N.J."/>
            <person name="Bolanos R."/>
            <person name="Fasulo D."/>
            <person name="Halldorsson B.V."/>
            <person name="Hannenhalli S."/>
            <person name="Turner R."/>
            <person name="Yooseph S."/>
            <person name="Lu F."/>
            <person name="Nusskern D.R."/>
            <person name="Shue B.C."/>
            <person name="Zheng X.H."/>
            <person name="Zhong F."/>
            <person name="Delcher A.L."/>
            <person name="Huson D.H."/>
            <person name="Kravitz S.A."/>
            <person name="Mouchard L."/>
            <person name="Reinert K."/>
            <person name="Remington K.A."/>
            <person name="Clark A.G."/>
            <person name="Waterman M.S."/>
            <person name="Eichler E.E."/>
            <person name="Adams M.D."/>
            <person name="Hunkapiller M.W."/>
            <person name="Myers E.W."/>
            <person name="Venter J.C."/>
        </authorList>
    </citation>
    <scope>NUCLEOTIDE SEQUENCE [LARGE SCALE GENOMIC DNA]</scope>
</reference>
<reference key="6">
    <citation type="journal article" date="2004" name="Genome Res.">
        <title>The status, quality, and expansion of the NIH full-length cDNA project: the Mammalian Gene Collection (MGC).</title>
        <authorList>
            <consortium name="The MGC Project Team"/>
        </authorList>
    </citation>
    <scope>NUCLEOTIDE SEQUENCE [LARGE SCALE MRNA] (ISOFORM 2)</scope>
    <scope>NUCLEOTIDE SEQUENCE [LARGE SCALE MRNA] OF 405-788 (ISOFORM 1)</scope>
    <source>
        <tissue>Eye</tissue>
        <tissue>Kidney</tissue>
    </source>
</reference>
<reference key="7">
    <citation type="journal article" date="1997" name="Hum. Genet.">
        <title>cDNAs with long CAG trinucleotide repeats from human brain.</title>
        <authorList>
            <person name="Margolis R.L."/>
            <person name="Abraham M.R."/>
            <person name="Gatchell S.B."/>
            <person name="Li S.-H."/>
            <person name="Kidwai A.S."/>
            <person name="Breschel T.S."/>
            <person name="Stine O.C."/>
            <person name="Callahan C."/>
            <person name="McInnis M.G."/>
            <person name="Ross C.A."/>
        </authorList>
    </citation>
    <scope>NUCLEOTIDE SEQUENCE [MRNA] OF 185-573 (ISOFORM 2)</scope>
    <source>
        <tissue>Brain cortex</tissue>
    </source>
</reference>
<reference key="8">
    <citation type="journal article" date="1999" name="Nature">
        <title>Composite co-activator ARC mediates chromatin-directed transcriptional activation.</title>
        <authorList>
            <person name="Naeaer A.M."/>
            <person name="Beaurang P.A."/>
            <person name="Zhou S."/>
            <person name="Abraham S."/>
            <person name="Solomon W.B."/>
            <person name="Tjian R."/>
        </authorList>
    </citation>
    <scope>IDENTIFICATION IN ARC COMPLEX</scope>
    <scope>PROTEIN SEQUENCE OF 39-48 AND 525-536</scope>
</reference>
<reference key="9">
    <citation type="journal article" date="2002" name="Nature">
        <title>A component of the ARC/Mediator complex required for TGF beta/Nodal signalling.</title>
        <authorList>
            <person name="Kato Y."/>
            <person name="Habas R."/>
            <person name="Katsuyama Y."/>
            <person name="Naeaer A.M."/>
            <person name="He X."/>
        </authorList>
    </citation>
    <scope>FUNCTION</scope>
    <scope>INTERACTION WITH SMAD1; SMAD2 AND SMAD3</scope>
</reference>
<reference key="10">
    <citation type="journal article" date="2004" name="Mol. Cell">
        <title>A set of consensus mammalian mediator subunits identified by multidimensional protein identification technology.</title>
        <authorList>
            <person name="Sato S."/>
            <person name="Tomomori-Sato C."/>
            <person name="Parmely T.J."/>
            <person name="Florens L."/>
            <person name="Zybailov B."/>
            <person name="Swanson S.K."/>
            <person name="Banks C.A.S."/>
            <person name="Jin J."/>
            <person name="Cai Y."/>
            <person name="Washburn M.P."/>
            <person name="Conaway J.W."/>
            <person name="Conaway R.C."/>
        </authorList>
    </citation>
    <scope>IDENTIFICATION BY MASS SPECTROMETRY</scope>
    <scope>IDENTIFICATION IN THE MEDIATOR COMPLEX</scope>
</reference>
<reference key="11">
    <citation type="journal article" date="2005" name="Mol. Cell">
        <title>MED1/TRAP220 exists predominantly in a TRAP/Mediator subpopulation enriched in RNA polymerase II and is required for ER-mediated transcription.</title>
        <authorList>
            <person name="Zhang X."/>
            <person name="Krutchinsky A."/>
            <person name="Fukuda A."/>
            <person name="Chen W."/>
            <person name="Yamamura S."/>
            <person name="Chait B.T."/>
            <person name="Roeder R.G."/>
        </authorList>
    </citation>
    <scope>IDENTIFICATION BY MASS SPECTROMETRY</scope>
    <scope>IDENTIFICATION IN THE MEDIATOR COMPLEX</scope>
    <scope>ASSOCIATION OF THE MEDIATOR COMPLEX WITH RNA POLYMERASE II</scope>
</reference>
<reference key="12">
    <citation type="journal article" date="2006" name="FEBS Lett.">
        <title>TRIM11 binds to and destabilizes a key component of the activator-mediated cofactor complex (ARC105) through the ubiquitin-proteasome system.</title>
        <authorList>
            <person name="Ishikawa H."/>
            <person name="Tachikawa H."/>
            <person name="Miura Y."/>
            <person name="Takahashi N."/>
        </authorList>
    </citation>
    <scope>INTERACTION WITH TRIM11</scope>
    <scope>UBIQUITINATION</scope>
    <scope>SUBCELLULAR LOCATION</scope>
</reference>
<reference key="13">
    <citation type="journal article" date="2006" name="Mol. Cell">
        <title>Genome-wide location of the coactivator mediator: binding without activation and transient Cdk8 interaction on DNA.</title>
        <authorList>
            <person name="Andrau J.-C."/>
            <person name="van de Pasch L."/>
            <person name="Lijnzaad P."/>
            <person name="Bijma T."/>
            <person name="Koerkamp M.G."/>
            <person name="van de Peppel J."/>
            <person name="Werner M."/>
            <person name="Holstege F.C.P."/>
        </authorList>
    </citation>
    <scope>FUNCTION</scope>
</reference>
<reference key="14">
    <citation type="journal article" date="2008" name="Nat. Cell Biol.">
        <title>TAZ controls Smad nucleocytoplasmic shuttling and regulates human embryonic stem-cell self-renewal.</title>
        <authorList>
            <person name="Varelas X."/>
            <person name="Sakuma R."/>
            <person name="Samavarchi-Tehrani P."/>
            <person name="Peerani R."/>
            <person name="Rao B.M."/>
            <person name="Dembowy J."/>
            <person name="Yaffe M.B."/>
            <person name="Zandstra P.W."/>
            <person name="Wrana J.L."/>
        </authorList>
    </citation>
    <scope>INTERACTION WITH WWTR1</scope>
</reference>
<reference key="15">
    <citation type="journal article" date="2008" name="Proc. Natl. Acad. Sci. U.S.A.">
        <title>A quantitative atlas of mitotic phosphorylation.</title>
        <authorList>
            <person name="Dephoure N."/>
            <person name="Zhou C."/>
            <person name="Villen J."/>
            <person name="Beausoleil S.A."/>
            <person name="Bakalarski C.E."/>
            <person name="Elledge S.J."/>
            <person name="Gygi S.P."/>
        </authorList>
    </citation>
    <scope>PHOSPHORYLATION [LARGE SCALE ANALYSIS] AT THR-603</scope>
    <scope>IDENTIFICATION BY MASS SPECTROMETRY [LARGE SCALE ANALYSIS]</scope>
    <source>
        <tissue>Cervix carcinoma</tissue>
    </source>
</reference>
<reference key="16">
    <citation type="journal article" date="2009" name="Anal. Chem.">
        <title>Lys-N and trypsin cover complementary parts of the phosphoproteome in a refined SCX-based approach.</title>
        <authorList>
            <person name="Gauci S."/>
            <person name="Helbig A.O."/>
            <person name="Slijper M."/>
            <person name="Krijgsveld J."/>
            <person name="Heck A.J."/>
            <person name="Mohammed S."/>
        </authorList>
    </citation>
    <scope>IDENTIFICATION BY MASS SPECTROMETRY [LARGE SCALE ANALYSIS]</scope>
</reference>
<reference key="17">
    <citation type="journal article" date="2011" name="BMC Syst. Biol.">
        <title>Initial characterization of the human central proteome.</title>
        <authorList>
            <person name="Burkard T.R."/>
            <person name="Planyavsky M."/>
            <person name="Kaupe I."/>
            <person name="Breitwieser F.P."/>
            <person name="Buerckstuemmer T."/>
            <person name="Bennett K.L."/>
            <person name="Superti-Furga G."/>
            <person name="Colinge J."/>
        </authorList>
    </citation>
    <scope>IDENTIFICATION BY MASS SPECTROMETRY [LARGE SCALE ANALYSIS]</scope>
</reference>
<reference key="18">
    <citation type="journal article" date="2013" name="J. Proteome Res.">
        <title>Toward a comprehensive characterization of a human cancer cell phosphoproteome.</title>
        <authorList>
            <person name="Zhou H."/>
            <person name="Di Palma S."/>
            <person name="Preisinger C."/>
            <person name="Peng M."/>
            <person name="Polat A.N."/>
            <person name="Heck A.J."/>
            <person name="Mohammed S."/>
        </authorList>
    </citation>
    <scope>PHOSPHORYLATION [LARGE SCALE ANALYSIS] AT THR-603</scope>
    <scope>IDENTIFICATION BY MASS SPECTROMETRY [LARGE SCALE ANALYSIS]</scope>
    <source>
        <tissue>Erythroleukemia</tissue>
    </source>
</reference>
<reference key="19">
    <citation type="journal article" date="2014" name="J. Proteomics">
        <title>An enzyme assisted RP-RPLC approach for in-depth analysis of human liver phosphoproteome.</title>
        <authorList>
            <person name="Bian Y."/>
            <person name="Song C."/>
            <person name="Cheng K."/>
            <person name="Dong M."/>
            <person name="Wang F."/>
            <person name="Huang J."/>
            <person name="Sun D."/>
            <person name="Wang L."/>
            <person name="Ye M."/>
            <person name="Zou H."/>
        </authorList>
    </citation>
    <scope>PHOSPHORYLATION [LARGE SCALE ANALYSIS] AT THR-603</scope>
    <scope>IDENTIFICATION BY MASS SPECTROMETRY [LARGE SCALE ANALYSIS]</scope>
    <source>
        <tissue>Liver</tissue>
    </source>
</reference>
<reference key="20">
    <citation type="journal article" date="2006" name="Nature">
        <title>An ARC/Mediator subunit required for SREBP control of cholesterol and lipid homeostasis.</title>
        <authorList>
            <person name="Yang F."/>
            <person name="Vought B.W."/>
            <person name="Satterlee J.S."/>
            <person name="Walker A.K."/>
            <person name="Jim Sun Z.-Y."/>
            <person name="Watts J.L."/>
            <person name="DeBeaumont R."/>
            <person name="Saito R.M."/>
            <person name="Hyberts S.G."/>
            <person name="Yang S."/>
            <person name="Macol C."/>
            <person name="Iyer L."/>
            <person name="Tjian R."/>
            <person name="van den Heuvel S."/>
            <person name="Hart A.C."/>
            <person name="Wagner G."/>
            <person name="Naeaer A.M."/>
        </authorList>
    </citation>
    <scope>STRUCTURE BY NMR OF 5-78</scope>
    <scope>FUNCTION</scope>
    <scope>INTERACTION WITH SREBF1 AND SREBF2</scope>
    <scope>MUTAGENESIS OF GLU-42; LEU-58 AND ALA-60</scope>
</reference>
<dbReference type="EMBL" id="AF056191">
    <property type="protein sequence ID" value="AAC12944.1"/>
    <property type="status" value="ALT_FRAME"/>
    <property type="molecule type" value="mRNA"/>
</dbReference>
<dbReference type="EMBL" id="AF328769">
    <property type="protein sequence ID" value="AAK58423.1"/>
    <property type="molecule type" value="mRNA"/>
</dbReference>
<dbReference type="EMBL" id="AK074268">
    <property type="protein sequence ID" value="BAB85034.1"/>
    <property type="status" value="ALT_SEQ"/>
    <property type="molecule type" value="mRNA"/>
</dbReference>
<dbReference type="EMBL" id="AK090465">
    <property type="protein sequence ID" value="BAC03446.1"/>
    <property type="status" value="ALT_INIT"/>
    <property type="molecule type" value="mRNA"/>
</dbReference>
<dbReference type="EMBL" id="CR456537">
    <property type="protein sequence ID" value="CAG30423.1"/>
    <property type="molecule type" value="mRNA"/>
</dbReference>
<dbReference type="EMBL" id="CH471176">
    <property type="protein sequence ID" value="EAX02951.1"/>
    <property type="molecule type" value="Genomic_DNA"/>
</dbReference>
<dbReference type="EMBL" id="CH471176">
    <property type="protein sequence ID" value="EAX02952.1"/>
    <property type="molecule type" value="Genomic_DNA"/>
</dbReference>
<dbReference type="EMBL" id="CH471176">
    <property type="protein sequence ID" value="EAX02954.1"/>
    <property type="molecule type" value="Genomic_DNA"/>
</dbReference>
<dbReference type="EMBL" id="CH471176">
    <property type="protein sequence ID" value="EAX02956.1"/>
    <property type="molecule type" value="Genomic_DNA"/>
</dbReference>
<dbReference type="EMBL" id="BC007529">
    <property type="protein sequence ID" value="AAH07529.1"/>
    <property type="molecule type" value="mRNA"/>
</dbReference>
<dbReference type="EMBL" id="BC013985">
    <property type="protein sequence ID" value="AAH13985.1"/>
    <property type="molecule type" value="mRNA"/>
</dbReference>
<dbReference type="EMBL" id="U80745">
    <property type="protein sequence ID" value="AAB91443.1"/>
    <property type="molecule type" value="mRNA"/>
</dbReference>
<dbReference type="CCDS" id="CCDS13781.1">
    <molecule id="Q96RN5-2"/>
</dbReference>
<dbReference type="CCDS" id="CCDS33602.1">
    <molecule id="Q96RN5-1"/>
</dbReference>
<dbReference type="CCDS" id="CCDS74824.1">
    <molecule id="Q96RN5-3"/>
</dbReference>
<dbReference type="RefSeq" id="NP_001003891.1">
    <molecule id="Q96RN5-1"/>
    <property type="nucleotide sequence ID" value="NM_001003891.3"/>
</dbReference>
<dbReference type="RefSeq" id="NP_001280164.1">
    <property type="nucleotide sequence ID" value="NM_001293235.1"/>
</dbReference>
<dbReference type="RefSeq" id="NP_001280165.1">
    <molecule id="Q96RN5-3"/>
    <property type="nucleotide sequence ID" value="NM_001293236.2"/>
</dbReference>
<dbReference type="RefSeq" id="NP_056973.2">
    <molecule id="Q96RN5-2"/>
    <property type="nucleotide sequence ID" value="NM_015889.4"/>
</dbReference>
<dbReference type="PDB" id="2GUT">
    <property type="method" value="NMR"/>
    <property type="chains" value="A=5-78"/>
</dbReference>
<dbReference type="PDB" id="7EMF">
    <property type="method" value="EM"/>
    <property type="resolution" value="3.50 A"/>
    <property type="chains" value="O=1-788"/>
</dbReference>
<dbReference type="PDB" id="7ENA">
    <property type="method" value="EM"/>
    <property type="resolution" value="4.07 A"/>
    <property type="chains" value="o=1-788"/>
</dbReference>
<dbReference type="PDB" id="7ENC">
    <property type="method" value="EM"/>
    <property type="resolution" value="4.13 A"/>
    <property type="chains" value="o=1-788"/>
</dbReference>
<dbReference type="PDB" id="7ENJ">
    <property type="method" value="EM"/>
    <property type="resolution" value="4.40 A"/>
    <property type="chains" value="O=1-788"/>
</dbReference>
<dbReference type="PDB" id="7LBM">
    <property type="method" value="EM"/>
    <property type="resolution" value="4.80 A"/>
    <property type="chains" value="z=1-788"/>
</dbReference>
<dbReference type="PDB" id="8GXQ">
    <property type="method" value="EM"/>
    <property type="resolution" value="5.04 A"/>
    <property type="chains" value="o=1-788"/>
</dbReference>
<dbReference type="PDB" id="8GXS">
    <property type="method" value="EM"/>
    <property type="resolution" value="4.16 A"/>
    <property type="chains" value="o=1-788"/>
</dbReference>
<dbReference type="PDB" id="8J9A">
    <property type="method" value="NMR"/>
    <property type="chains" value="A=493-601"/>
</dbReference>
<dbReference type="PDB" id="8T9D">
    <property type="method" value="EM"/>
    <property type="resolution" value="4.66 A"/>
    <property type="chains" value="J=1-788"/>
</dbReference>
<dbReference type="PDB" id="8TQW">
    <property type="method" value="EM"/>
    <property type="resolution" value="8.20 A"/>
    <property type="chains" value="O=1-788"/>
</dbReference>
<dbReference type="PDB" id="8TRH">
    <property type="method" value="EM"/>
    <property type="resolution" value="3.70 A"/>
    <property type="chains" value="O=1-788"/>
</dbReference>
<dbReference type="PDBsum" id="2GUT"/>
<dbReference type="PDBsum" id="7EMF"/>
<dbReference type="PDBsum" id="7ENA"/>
<dbReference type="PDBsum" id="7ENC"/>
<dbReference type="PDBsum" id="7ENJ"/>
<dbReference type="PDBsum" id="7LBM"/>
<dbReference type="PDBsum" id="8GXQ"/>
<dbReference type="PDBsum" id="8GXS"/>
<dbReference type="PDBsum" id="8J9A"/>
<dbReference type="PDBsum" id="8T9D"/>
<dbReference type="PDBsum" id="8TQW"/>
<dbReference type="PDBsum" id="8TRH"/>
<dbReference type="BMRB" id="Q96RN5"/>
<dbReference type="EMDB" id="EMD-23255"/>
<dbReference type="EMDB" id="EMD-31191"/>
<dbReference type="EMDB" id="EMD-31204"/>
<dbReference type="EMDB" id="EMD-31207"/>
<dbReference type="EMDB" id="EMD-31211"/>
<dbReference type="EMDB" id="EMD-34359"/>
<dbReference type="EMDB" id="EMD-34360"/>
<dbReference type="EMDB" id="EMD-41107"/>
<dbReference type="EMDB" id="EMD-41565"/>
<dbReference type="EMDB" id="EMD-41580"/>
<dbReference type="SMR" id="Q96RN5"/>
<dbReference type="BioGRID" id="119623">
    <property type="interactions" value="135"/>
</dbReference>
<dbReference type="ComplexPortal" id="CPX-3227">
    <property type="entry name" value="Core mediator complex"/>
</dbReference>
<dbReference type="CORUM" id="Q96RN5"/>
<dbReference type="DIP" id="DIP-32908N"/>
<dbReference type="FunCoup" id="Q96RN5">
    <property type="interactions" value="3496"/>
</dbReference>
<dbReference type="IntAct" id="Q96RN5">
    <property type="interactions" value="68"/>
</dbReference>
<dbReference type="MINT" id="Q96RN5"/>
<dbReference type="STRING" id="9606.ENSP00000263205"/>
<dbReference type="GlyCosmos" id="Q96RN5">
    <property type="glycosylation" value="1 site, 1 glycan"/>
</dbReference>
<dbReference type="GlyGen" id="Q96RN5">
    <property type="glycosylation" value="12 sites, 1 O-linked glycan (12 sites)"/>
</dbReference>
<dbReference type="iPTMnet" id="Q96RN5"/>
<dbReference type="PhosphoSitePlus" id="Q96RN5"/>
<dbReference type="BioMuta" id="MED15"/>
<dbReference type="DMDM" id="27734440"/>
<dbReference type="jPOST" id="Q96RN5"/>
<dbReference type="MassIVE" id="Q96RN5"/>
<dbReference type="PaxDb" id="9606-ENSP00000263205"/>
<dbReference type="PeptideAtlas" id="Q96RN5"/>
<dbReference type="ProteomicsDB" id="77993">
    <molecule id="Q96RN5-1"/>
</dbReference>
<dbReference type="ProteomicsDB" id="77994">
    <molecule id="Q96RN5-2"/>
</dbReference>
<dbReference type="ProteomicsDB" id="77995">
    <molecule id="Q96RN5-3"/>
</dbReference>
<dbReference type="Pumba" id="Q96RN5"/>
<dbReference type="Antibodypedia" id="282">
    <property type="antibodies" value="305 antibodies from 32 providers"/>
</dbReference>
<dbReference type="DNASU" id="51586"/>
<dbReference type="Ensembl" id="ENST00000263205.11">
    <molecule id="Q96RN5-1"/>
    <property type="protein sequence ID" value="ENSP00000263205.7"/>
    <property type="gene ID" value="ENSG00000099917.17"/>
</dbReference>
<dbReference type="Ensembl" id="ENST00000292733.11">
    <molecule id="Q96RN5-2"/>
    <property type="protein sequence ID" value="ENSP00000292733.7"/>
    <property type="gene ID" value="ENSG00000099917.17"/>
</dbReference>
<dbReference type="Ensembl" id="ENST00000382974.6">
    <molecule id="Q96RN5-3"/>
    <property type="protein sequence ID" value="ENSP00000372434.2"/>
    <property type="gene ID" value="ENSG00000099917.17"/>
</dbReference>
<dbReference type="GeneID" id="51586"/>
<dbReference type="KEGG" id="hsa:51586"/>
<dbReference type="MANE-Select" id="ENST00000263205.11">
    <property type="protein sequence ID" value="ENSP00000263205.7"/>
    <property type="RefSeq nucleotide sequence ID" value="NM_001003891.3"/>
    <property type="RefSeq protein sequence ID" value="NP_001003891.1"/>
</dbReference>
<dbReference type="UCSC" id="uc002zsp.4">
    <molecule id="Q96RN5-1"/>
    <property type="organism name" value="human"/>
</dbReference>
<dbReference type="AGR" id="HGNC:14248"/>
<dbReference type="CTD" id="51586"/>
<dbReference type="DisGeNET" id="51586"/>
<dbReference type="GeneCards" id="MED15"/>
<dbReference type="HGNC" id="HGNC:14248">
    <property type="gene designation" value="MED15"/>
</dbReference>
<dbReference type="HPA" id="ENSG00000099917">
    <property type="expression patterns" value="Low tissue specificity"/>
</dbReference>
<dbReference type="MIM" id="607372">
    <property type="type" value="gene"/>
</dbReference>
<dbReference type="neXtProt" id="NX_Q96RN5"/>
<dbReference type="OpenTargets" id="ENSG00000099917"/>
<dbReference type="PharmGKB" id="PA33088"/>
<dbReference type="VEuPathDB" id="HostDB:ENSG00000099917"/>
<dbReference type="eggNOG" id="KOG4274">
    <property type="taxonomic scope" value="Eukaryota"/>
</dbReference>
<dbReference type="GeneTree" id="ENSGT00730000111140"/>
<dbReference type="HOGENOM" id="CLU_023921_0_0_1"/>
<dbReference type="InParanoid" id="Q96RN5"/>
<dbReference type="OMA" id="GPVPNQM"/>
<dbReference type="OrthoDB" id="10055322at2759"/>
<dbReference type="PAN-GO" id="Q96RN5">
    <property type="GO annotations" value="0 GO annotations based on evolutionary models"/>
</dbReference>
<dbReference type="PhylomeDB" id="Q96RN5"/>
<dbReference type="TreeFam" id="TF324988"/>
<dbReference type="PathwayCommons" id="Q96RN5"/>
<dbReference type="Reactome" id="R-HSA-1989781">
    <property type="pathway name" value="PPARA activates gene expression"/>
</dbReference>
<dbReference type="Reactome" id="R-HSA-212436">
    <property type="pathway name" value="Generic Transcription Pathway"/>
</dbReference>
<dbReference type="Reactome" id="R-HSA-381340">
    <property type="pathway name" value="Transcriptional regulation of white adipocyte differentiation"/>
</dbReference>
<dbReference type="Reactome" id="R-HSA-9833110">
    <property type="pathway name" value="RSV-host interactions"/>
</dbReference>
<dbReference type="SignaLink" id="Q96RN5"/>
<dbReference type="SIGNOR" id="Q96RN5"/>
<dbReference type="BioGRID-ORCS" id="51586">
    <property type="hits" value="139 hits in 1181 CRISPR screens"/>
</dbReference>
<dbReference type="ChiTaRS" id="MED15">
    <property type="organism name" value="human"/>
</dbReference>
<dbReference type="EvolutionaryTrace" id="Q96RN5"/>
<dbReference type="GeneWiki" id="MED15"/>
<dbReference type="GenomeRNAi" id="51586"/>
<dbReference type="Pharos" id="Q96RN5">
    <property type="development level" value="Tbio"/>
</dbReference>
<dbReference type="PRO" id="PR:Q96RN5"/>
<dbReference type="Proteomes" id="UP000005640">
    <property type="component" value="Chromosome 22"/>
</dbReference>
<dbReference type="RNAct" id="Q96RN5">
    <property type="molecule type" value="protein"/>
</dbReference>
<dbReference type="Bgee" id="ENSG00000099917">
    <property type="expression patterns" value="Expressed in sural nerve and 193 other cell types or tissues"/>
</dbReference>
<dbReference type="ExpressionAtlas" id="Q96RN5">
    <property type="expression patterns" value="baseline and differential"/>
</dbReference>
<dbReference type="GO" id="GO:0070847">
    <property type="term" value="C:core mediator complex"/>
    <property type="evidence" value="ECO:0000353"/>
    <property type="project" value="ComplexPortal"/>
</dbReference>
<dbReference type="GO" id="GO:0005737">
    <property type="term" value="C:cytoplasm"/>
    <property type="evidence" value="ECO:0007669"/>
    <property type="project" value="UniProtKB-SubCell"/>
</dbReference>
<dbReference type="GO" id="GO:0016020">
    <property type="term" value="C:membrane"/>
    <property type="evidence" value="ECO:0007005"/>
    <property type="project" value="UniProtKB"/>
</dbReference>
<dbReference type="GO" id="GO:0005654">
    <property type="term" value="C:nucleoplasm"/>
    <property type="evidence" value="ECO:0000314"/>
    <property type="project" value="HPA"/>
</dbReference>
<dbReference type="GO" id="GO:0005634">
    <property type="term" value="C:nucleus"/>
    <property type="evidence" value="ECO:0000314"/>
    <property type="project" value="ComplexPortal"/>
</dbReference>
<dbReference type="GO" id="GO:0003712">
    <property type="term" value="F:transcription coregulator activity"/>
    <property type="evidence" value="ECO:0007669"/>
    <property type="project" value="InterPro"/>
</dbReference>
<dbReference type="GO" id="GO:0032968">
    <property type="term" value="P:positive regulation of transcription elongation by RNA polymerase II"/>
    <property type="evidence" value="ECO:0000303"/>
    <property type="project" value="ComplexPortal"/>
</dbReference>
<dbReference type="GO" id="GO:0060261">
    <property type="term" value="P:positive regulation of transcription initiation by RNA polymerase II"/>
    <property type="evidence" value="ECO:0000303"/>
    <property type="project" value="ComplexPortal"/>
</dbReference>
<dbReference type="GO" id="GO:0051123">
    <property type="term" value="P:RNA polymerase II preinitiation complex assembly"/>
    <property type="evidence" value="ECO:0000303"/>
    <property type="project" value="ComplexPortal"/>
</dbReference>
<dbReference type="GO" id="GO:0035019">
    <property type="term" value="P:somatic stem cell population maintenance"/>
    <property type="evidence" value="ECO:0007669"/>
    <property type="project" value="Ensembl"/>
</dbReference>
<dbReference type="FunFam" id="1.10.246.20:FF:000002">
    <property type="entry name" value="Mediator of RNA polymerase II transcription subunit 15"/>
    <property type="match status" value="1"/>
</dbReference>
<dbReference type="Gene3D" id="1.10.246.20">
    <property type="entry name" value="Coactivator CBP, KIX domain"/>
    <property type="match status" value="1"/>
</dbReference>
<dbReference type="InterPro" id="IPR036529">
    <property type="entry name" value="KIX_dom_sf"/>
</dbReference>
<dbReference type="InterPro" id="IPR048386">
    <property type="entry name" value="Med15_C"/>
</dbReference>
<dbReference type="InterPro" id="IPR048385">
    <property type="entry name" value="Med15_central"/>
</dbReference>
<dbReference type="InterPro" id="IPR019087">
    <property type="entry name" value="Med15_N"/>
</dbReference>
<dbReference type="PANTHER" id="PTHR31804">
    <property type="entry name" value="MEDIATOR OF RNA POLYMERASE II TRANSCRIPTION SUBUNIT 15"/>
    <property type="match status" value="1"/>
</dbReference>
<dbReference type="PANTHER" id="PTHR31804:SF3">
    <property type="entry name" value="MEDIATOR OF RNA POLYMERASE II TRANSCRIPTION SUBUNIT 15"/>
    <property type="match status" value="1"/>
</dbReference>
<dbReference type="Pfam" id="PF21539">
    <property type="entry name" value="Med15_C"/>
    <property type="match status" value="1"/>
</dbReference>
<dbReference type="Pfam" id="PF21538">
    <property type="entry name" value="Med15_M"/>
    <property type="match status" value="1"/>
</dbReference>
<dbReference type="Pfam" id="PF09606">
    <property type="entry name" value="Med15_N"/>
    <property type="match status" value="1"/>
</dbReference>